<evidence type="ECO:0000255" key="1">
    <source>
        <dbReference type="HAMAP-Rule" id="MF_02113"/>
    </source>
</evidence>
<sequence>MVLATALGLRFDGGVVLAADRRVSYNGFILSKSARKVFLINERVGVSTAGLPGDFQELVDVLKYNITMYELENEKAATPTNVAKLLSILLYQGRFSGIYYAELVVGGIDNSGPKIFVLDPAGGLMEENFSAVGSGAQIATGILERFFKEGMSEKEAVELAERAMREAISRDALSGDGIDLLIITSKGSRMEFIPVRTA</sequence>
<organism>
    <name type="scientific">Korarchaeum cryptofilum (strain OPF8)</name>
    <dbReference type="NCBI Taxonomy" id="374847"/>
    <lineage>
        <taxon>Archaea</taxon>
        <taxon>Thermoproteota</taxon>
        <taxon>Candidatus Korarchaeia</taxon>
        <taxon>Candidatus Korarchaeales</taxon>
        <taxon>Candidatus Korarchaeaceae</taxon>
        <taxon>Candidatus Korarchaeum</taxon>
    </lineage>
</organism>
<feature type="propeptide" id="PRO_0000397324" description="Removed in mature form; by autocatalysis" evidence="1">
    <location>
        <begin position="1"/>
        <end position="4"/>
    </location>
</feature>
<feature type="chain" id="PRO_0000397325" description="Proteasome subunit beta 2">
    <location>
        <begin position="5"/>
        <end position="198"/>
    </location>
</feature>
<feature type="active site" description="Nucleophile" evidence="1">
    <location>
        <position position="5"/>
    </location>
</feature>
<accession>B1L6X8</accession>
<proteinExistence type="inferred from homology"/>
<gene>
    <name evidence="1" type="primary">psmB2</name>
    <name type="ordered locus">Kcr_1461</name>
</gene>
<keyword id="KW-0068">Autocatalytic cleavage</keyword>
<keyword id="KW-0963">Cytoplasm</keyword>
<keyword id="KW-0378">Hydrolase</keyword>
<keyword id="KW-0645">Protease</keyword>
<keyword id="KW-0647">Proteasome</keyword>
<keyword id="KW-1185">Reference proteome</keyword>
<keyword id="KW-0888">Threonine protease</keyword>
<keyword id="KW-0865">Zymogen</keyword>
<name>PSB2_KORCO</name>
<protein>
    <recommendedName>
        <fullName evidence="1">Proteasome subunit beta 2</fullName>
        <ecNumber evidence="1">3.4.25.1</ecNumber>
    </recommendedName>
    <alternativeName>
        <fullName evidence="1">20S proteasome beta subunit 2</fullName>
    </alternativeName>
    <alternativeName>
        <fullName evidence="1">Proteasome core protein PsmB 2</fullName>
    </alternativeName>
</protein>
<comment type="function">
    <text evidence="1">Component of the proteasome core, a large protease complex with broad specificity involved in protein degradation.</text>
</comment>
<comment type="catalytic activity">
    <reaction evidence="1">
        <text>Cleavage of peptide bonds with very broad specificity.</text>
        <dbReference type="EC" id="3.4.25.1"/>
    </reaction>
</comment>
<comment type="activity regulation">
    <text evidence="1">The formation of the proteasomal ATPase PAN-20S proteasome complex, via the docking of the C-termini of PAN into the intersubunit pockets in the alpha-rings, triggers opening of the gate for substrate entry. Interconversion between the open-gate and close-gate conformations leads to a dynamic regulation of the 20S proteasome proteolysis activity.</text>
</comment>
<comment type="subunit">
    <text evidence="1">The 20S proteasome core is composed of 14 alpha and 14 beta subunits that assemble into four stacked heptameric rings, resulting in a barrel-shaped structure. The two inner rings, each composed of seven catalytic beta subunits, are sandwiched by two outer rings, each composed of seven alpha subunits. The catalytic chamber with the active sites is on the inside of the barrel. Has a gated structure, the ends of the cylinder being occluded by the N-termini of the alpha-subunits. Is capped at one or both ends by the proteasome regulatory ATPase, PAN.</text>
</comment>
<comment type="subcellular location">
    <subcellularLocation>
        <location evidence="1">Cytoplasm</location>
    </subcellularLocation>
</comment>
<comment type="similarity">
    <text evidence="1">Belongs to the peptidase T1B family.</text>
</comment>
<dbReference type="EC" id="3.4.25.1" evidence="1"/>
<dbReference type="EMBL" id="CP000968">
    <property type="protein sequence ID" value="ACB08207.1"/>
    <property type="molecule type" value="Genomic_DNA"/>
</dbReference>
<dbReference type="RefSeq" id="WP_012310104.1">
    <property type="nucleotide sequence ID" value="NC_010482.1"/>
</dbReference>
<dbReference type="SMR" id="B1L6X8"/>
<dbReference type="FunCoup" id="B1L6X8">
    <property type="interactions" value="163"/>
</dbReference>
<dbReference type="STRING" id="374847.Kcr_1461"/>
<dbReference type="EnsemblBacteria" id="ACB08207">
    <property type="protein sequence ID" value="ACB08207"/>
    <property type="gene ID" value="Kcr_1461"/>
</dbReference>
<dbReference type="GeneID" id="6094738"/>
<dbReference type="KEGG" id="kcr:Kcr_1461"/>
<dbReference type="eggNOG" id="arCOG00970">
    <property type="taxonomic scope" value="Archaea"/>
</dbReference>
<dbReference type="HOGENOM" id="CLU_035750_7_2_2"/>
<dbReference type="InParanoid" id="B1L6X8"/>
<dbReference type="OrthoDB" id="6330at2157"/>
<dbReference type="PhylomeDB" id="B1L6X8"/>
<dbReference type="Proteomes" id="UP000001686">
    <property type="component" value="Chromosome"/>
</dbReference>
<dbReference type="GO" id="GO:0005829">
    <property type="term" value="C:cytosol"/>
    <property type="evidence" value="ECO:0000318"/>
    <property type="project" value="GO_Central"/>
</dbReference>
<dbReference type="GO" id="GO:0019774">
    <property type="term" value="C:proteasome core complex, beta-subunit complex"/>
    <property type="evidence" value="ECO:0000318"/>
    <property type="project" value="GO_Central"/>
</dbReference>
<dbReference type="GO" id="GO:0004175">
    <property type="term" value="F:endopeptidase activity"/>
    <property type="evidence" value="ECO:0000318"/>
    <property type="project" value="GO_Central"/>
</dbReference>
<dbReference type="GO" id="GO:0004298">
    <property type="term" value="F:threonine-type endopeptidase activity"/>
    <property type="evidence" value="ECO:0007669"/>
    <property type="project" value="UniProtKB-UniRule"/>
</dbReference>
<dbReference type="GO" id="GO:0043161">
    <property type="term" value="P:proteasome-mediated ubiquitin-dependent protein catabolic process"/>
    <property type="evidence" value="ECO:0000318"/>
    <property type="project" value="GO_Central"/>
</dbReference>
<dbReference type="Gene3D" id="3.60.20.10">
    <property type="entry name" value="Glutamine Phosphoribosylpyrophosphate, subunit 1, domain 1"/>
    <property type="match status" value="1"/>
</dbReference>
<dbReference type="HAMAP" id="MF_02113_A">
    <property type="entry name" value="Proteasome_B_A"/>
    <property type="match status" value="1"/>
</dbReference>
<dbReference type="InterPro" id="IPR029055">
    <property type="entry name" value="Ntn_hydrolases_N"/>
</dbReference>
<dbReference type="InterPro" id="IPR019983">
    <property type="entry name" value="Pept_T1A_Psome_bsu_arc"/>
</dbReference>
<dbReference type="InterPro" id="IPR000243">
    <property type="entry name" value="Pept_T1A_subB"/>
</dbReference>
<dbReference type="InterPro" id="IPR016050">
    <property type="entry name" value="Proteasome_bsu_CS"/>
</dbReference>
<dbReference type="InterPro" id="IPR001353">
    <property type="entry name" value="Proteasome_sua/b"/>
</dbReference>
<dbReference type="InterPro" id="IPR023333">
    <property type="entry name" value="Proteasome_suB-type"/>
</dbReference>
<dbReference type="PANTHER" id="PTHR32194:SF0">
    <property type="entry name" value="ATP-DEPENDENT PROTEASE SUBUNIT HSLV"/>
    <property type="match status" value="1"/>
</dbReference>
<dbReference type="PANTHER" id="PTHR32194">
    <property type="entry name" value="METALLOPROTEASE TLDD"/>
    <property type="match status" value="1"/>
</dbReference>
<dbReference type="Pfam" id="PF00227">
    <property type="entry name" value="Proteasome"/>
    <property type="match status" value="1"/>
</dbReference>
<dbReference type="PRINTS" id="PR00141">
    <property type="entry name" value="PROTEASOME"/>
</dbReference>
<dbReference type="SUPFAM" id="SSF56235">
    <property type="entry name" value="N-terminal nucleophile aminohydrolases (Ntn hydrolases)"/>
    <property type="match status" value="1"/>
</dbReference>
<dbReference type="PROSITE" id="PS00854">
    <property type="entry name" value="PROTEASOME_BETA_1"/>
    <property type="match status" value="1"/>
</dbReference>
<dbReference type="PROSITE" id="PS51476">
    <property type="entry name" value="PROTEASOME_BETA_2"/>
    <property type="match status" value="1"/>
</dbReference>
<reference key="1">
    <citation type="journal article" date="2008" name="Proc. Natl. Acad. Sci. U.S.A.">
        <title>A korarchaeal genome reveals new insights into the evolution of the Archaea.</title>
        <authorList>
            <person name="Elkins J.G."/>
            <person name="Podar M."/>
            <person name="Graham D.E."/>
            <person name="Makarova K.S."/>
            <person name="Wolf Y."/>
            <person name="Randau L."/>
            <person name="Hedlund B.P."/>
            <person name="Brochier-Armanet C."/>
            <person name="Kunin V."/>
            <person name="Anderson I."/>
            <person name="Lapidus A."/>
            <person name="Goltsman E."/>
            <person name="Barry K."/>
            <person name="Koonin E.V."/>
            <person name="Hugenholtz P."/>
            <person name="Kyrpides N."/>
            <person name="Wanner G."/>
            <person name="Richardson P."/>
            <person name="Keller M."/>
            <person name="Stetter K.O."/>
        </authorList>
    </citation>
    <scope>NUCLEOTIDE SEQUENCE [LARGE SCALE GENOMIC DNA]</scope>
    <source>
        <strain>OPF8</strain>
    </source>
</reference>